<evidence type="ECO:0000255" key="1">
    <source>
        <dbReference type="HAMAP-Rule" id="MF_00137"/>
    </source>
</evidence>
<reference key="1">
    <citation type="journal article" date="2005" name="Proc. Natl. Acad. Sci. U.S.A.">
        <title>Genome analysis of multiple pathogenic isolates of Streptococcus agalactiae: implications for the microbial 'pan-genome'.</title>
        <authorList>
            <person name="Tettelin H."/>
            <person name="Masignani V."/>
            <person name="Cieslewicz M.J."/>
            <person name="Donati C."/>
            <person name="Medini D."/>
            <person name="Ward N.L."/>
            <person name="Angiuoli S.V."/>
            <person name="Crabtree J."/>
            <person name="Jones A.L."/>
            <person name="Durkin A.S."/>
            <person name="DeBoy R.T."/>
            <person name="Davidsen T.M."/>
            <person name="Mora M."/>
            <person name="Scarselli M."/>
            <person name="Margarit y Ros I."/>
            <person name="Peterson J.D."/>
            <person name="Hauser C.R."/>
            <person name="Sundaram J.P."/>
            <person name="Nelson W.C."/>
            <person name="Madupu R."/>
            <person name="Brinkac L.M."/>
            <person name="Dodson R.J."/>
            <person name="Rosovitz M.J."/>
            <person name="Sullivan S.A."/>
            <person name="Daugherty S.C."/>
            <person name="Haft D.H."/>
            <person name="Selengut J."/>
            <person name="Gwinn M.L."/>
            <person name="Zhou L."/>
            <person name="Zafar N."/>
            <person name="Khouri H."/>
            <person name="Radune D."/>
            <person name="Dimitrov G."/>
            <person name="Watkins K."/>
            <person name="O'Connor K.J."/>
            <person name="Smith S."/>
            <person name="Utterback T.R."/>
            <person name="White O."/>
            <person name="Rubens C.E."/>
            <person name="Grandi G."/>
            <person name="Madoff L.C."/>
            <person name="Kasper D.L."/>
            <person name="Telford J.L."/>
            <person name="Wessels M.R."/>
            <person name="Rappuoli R."/>
            <person name="Fraser C.M."/>
        </authorList>
    </citation>
    <scope>NUCLEOTIDE SEQUENCE [LARGE SCALE GENOMIC DNA]</scope>
    <source>
        <strain>ATCC 27591 / A909 / CDC SS700</strain>
    </source>
</reference>
<gene>
    <name evidence="1" type="primary">purC</name>
    <name type="ordered locus">SAK_0057</name>
</gene>
<organism>
    <name type="scientific">Streptococcus agalactiae serotype Ia (strain ATCC 27591 / A909 / CDC SS700)</name>
    <dbReference type="NCBI Taxonomy" id="205921"/>
    <lineage>
        <taxon>Bacteria</taxon>
        <taxon>Bacillati</taxon>
        <taxon>Bacillota</taxon>
        <taxon>Bacilli</taxon>
        <taxon>Lactobacillales</taxon>
        <taxon>Streptococcaceae</taxon>
        <taxon>Streptococcus</taxon>
    </lineage>
</organism>
<keyword id="KW-0067">ATP-binding</keyword>
<keyword id="KW-0436">Ligase</keyword>
<keyword id="KW-0547">Nucleotide-binding</keyword>
<keyword id="KW-0658">Purine biosynthesis</keyword>
<accession>Q3K403</accession>
<comment type="catalytic activity">
    <reaction evidence="1">
        <text>5-amino-1-(5-phospho-D-ribosyl)imidazole-4-carboxylate + L-aspartate + ATP = (2S)-2-[5-amino-1-(5-phospho-beta-D-ribosyl)imidazole-4-carboxamido]succinate + ADP + phosphate + 2 H(+)</text>
        <dbReference type="Rhea" id="RHEA:22628"/>
        <dbReference type="ChEBI" id="CHEBI:15378"/>
        <dbReference type="ChEBI" id="CHEBI:29991"/>
        <dbReference type="ChEBI" id="CHEBI:30616"/>
        <dbReference type="ChEBI" id="CHEBI:43474"/>
        <dbReference type="ChEBI" id="CHEBI:58443"/>
        <dbReference type="ChEBI" id="CHEBI:77657"/>
        <dbReference type="ChEBI" id="CHEBI:456216"/>
        <dbReference type="EC" id="6.3.2.6"/>
    </reaction>
</comment>
<comment type="pathway">
    <text evidence="1">Purine metabolism; IMP biosynthesis via de novo pathway; 5-amino-1-(5-phospho-D-ribosyl)imidazole-4-carboxamide from 5-amino-1-(5-phospho-D-ribosyl)imidazole-4-carboxylate: step 1/2.</text>
</comment>
<comment type="similarity">
    <text evidence="1">Belongs to the SAICAR synthetase family.</text>
</comment>
<proteinExistence type="inferred from homology"/>
<feature type="chain" id="PRO_1000018792" description="Phosphoribosylaminoimidazole-succinocarboxamide synthase">
    <location>
        <begin position="1"/>
        <end position="235"/>
    </location>
</feature>
<sequence>MTNQLIYTGKAKDIYSTKDENMIRTVYKDQATMLNGARKETIDGKGALNNQISSLIFEKLNMAGVVTHYIEQISKNEQLNKKVDIIPLEVVLRNVTAGSFSKRFGVEEGRVLETPIVEFYYKNDDLNDPFINDEHVKFLGIVNDEEIAYLKGETRRINELLKDWFAQIGINLIDFKLEFGFDNDGKIILADEFSPDNCRLWDAEGNHMDKDIFRRDLGSLTDAYQVVLDKLKTLD</sequence>
<dbReference type="EC" id="6.3.2.6" evidence="1"/>
<dbReference type="EMBL" id="CP000114">
    <property type="protein sequence ID" value="ABA45726.1"/>
    <property type="molecule type" value="Genomic_DNA"/>
</dbReference>
<dbReference type="RefSeq" id="WP_000184493.1">
    <property type="nucleotide sequence ID" value="NC_007432.1"/>
</dbReference>
<dbReference type="SMR" id="Q3K403"/>
<dbReference type="KEGG" id="sak:SAK_0057"/>
<dbReference type="HOGENOM" id="CLU_061495_2_0_9"/>
<dbReference type="UniPathway" id="UPA00074">
    <property type="reaction ID" value="UER00131"/>
</dbReference>
<dbReference type="GO" id="GO:0005524">
    <property type="term" value="F:ATP binding"/>
    <property type="evidence" value="ECO:0007669"/>
    <property type="project" value="UniProtKB-KW"/>
</dbReference>
<dbReference type="GO" id="GO:0004639">
    <property type="term" value="F:phosphoribosylaminoimidazolesuccinocarboxamide synthase activity"/>
    <property type="evidence" value="ECO:0007669"/>
    <property type="project" value="UniProtKB-UniRule"/>
</dbReference>
<dbReference type="GO" id="GO:0006189">
    <property type="term" value="P:'de novo' IMP biosynthetic process"/>
    <property type="evidence" value="ECO:0007669"/>
    <property type="project" value="UniProtKB-UniRule"/>
</dbReference>
<dbReference type="GO" id="GO:0009236">
    <property type="term" value="P:cobalamin biosynthetic process"/>
    <property type="evidence" value="ECO:0007669"/>
    <property type="project" value="InterPro"/>
</dbReference>
<dbReference type="CDD" id="cd01415">
    <property type="entry name" value="SAICAR_synt_PurC"/>
    <property type="match status" value="1"/>
</dbReference>
<dbReference type="FunFam" id="3.30.470.20:FF:000006">
    <property type="entry name" value="Phosphoribosylaminoimidazole-succinocarboxamide synthase"/>
    <property type="match status" value="1"/>
</dbReference>
<dbReference type="Gene3D" id="3.30.470.20">
    <property type="entry name" value="ATP-grasp fold, B domain"/>
    <property type="match status" value="1"/>
</dbReference>
<dbReference type="Gene3D" id="3.30.200.20">
    <property type="entry name" value="Phosphorylase Kinase, domain 1"/>
    <property type="match status" value="1"/>
</dbReference>
<dbReference type="HAMAP" id="MF_00137">
    <property type="entry name" value="SAICAR_synth"/>
    <property type="match status" value="1"/>
</dbReference>
<dbReference type="InterPro" id="IPR028923">
    <property type="entry name" value="SAICAR_synt/ADE2_N"/>
</dbReference>
<dbReference type="InterPro" id="IPR033934">
    <property type="entry name" value="SAICAR_synt_PurC"/>
</dbReference>
<dbReference type="InterPro" id="IPR001636">
    <property type="entry name" value="SAICAR_synth"/>
</dbReference>
<dbReference type="InterPro" id="IPR050089">
    <property type="entry name" value="SAICAR_synthetase"/>
</dbReference>
<dbReference type="InterPro" id="IPR018236">
    <property type="entry name" value="SAICAR_synthetase_CS"/>
</dbReference>
<dbReference type="NCBIfam" id="TIGR00081">
    <property type="entry name" value="purC"/>
    <property type="match status" value="1"/>
</dbReference>
<dbReference type="PANTHER" id="PTHR43599">
    <property type="entry name" value="MULTIFUNCTIONAL PROTEIN ADE2"/>
    <property type="match status" value="1"/>
</dbReference>
<dbReference type="PANTHER" id="PTHR43599:SF3">
    <property type="entry name" value="SI:DKEY-6E2.2"/>
    <property type="match status" value="1"/>
</dbReference>
<dbReference type="Pfam" id="PF01259">
    <property type="entry name" value="SAICAR_synt"/>
    <property type="match status" value="1"/>
</dbReference>
<dbReference type="SUPFAM" id="SSF56104">
    <property type="entry name" value="SAICAR synthase-like"/>
    <property type="match status" value="1"/>
</dbReference>
<dbReference type="PROSITE" id="PS01057">
    <property type="entry name" value="SAICAR_SYNTHETASE_1"/>
    <property type="match status" value="1"/>
</dbReference>
<dbReference type="PROSITE" id="PS01058">
    <property type="entry name" value="SAICAR_SYNTHETASE_2"/>
    <property type="match status" value="1"/>
</dbReference>
<protein>
    <recommendedName>
        <fullName evidence="1">Phosphoribosylaminoimidazole-succinocarboxamide synthase</fullName>
        <ecNumber evidence="1">6.3.2.6</ecNumber>
    </recommendedName>
    <alternativeName>
        <fullName evidence="1">SAICAR synthetase</fullName>
    </alternativeName>
</protein>
<name>PUR7_STRA1</name>